<evidence type="ECO:0000255" key="1">
    <source>
        <dbReference type="HAMAP-Rule" id="MF_00412"/>
    </source>
</evidence>
<gene>
    <name evidence="1" type="primary">proA</name>
    <name type="ordered locus">Mnod_4728</name>
</gene>
<organism>
    <name type="scientific">Methylobacterium nodulans (strain LMG 21967 / CNCM I-2342 / ORS 2060)</name>
    <dbReference type="NCBI Taxonomy" id="460265"/>
    <lineage>
        <taxon>Bacteria</taxon>
        <taxon>Pseudomonadati</taxon>
        <taxon>Pseudomonadota</taxon>
        <taxon>Alphaproteobacteria</taxon>
        <taxon>Hyphomicrobiales</taxon>
        <taxon>Methylobacteriaceae</taxon>
        <taxon>Methylobacterium</taxon>
    </lineage>
</organism>
<comment type="function">
    <text evidence="1">Catalyzes the NADPH-dependent reduction of L-glutamate 5-phosphate into L-glutamate 5-semialdehyde and phosphate. The product spontaneously undergoes cyclization to form 1-pyrroline-5-carboxylate.</text>
</comment>
<comment type="catalytic activity">
    <reaction evidence="1">
        <text>L-glutamate 5-semialdehyde + phosphate + NADP(+) = L-glutamyl 5-phosphate + NADPH + H(+)</text>
        <dbReference type="Rhea" id="RHEA:19541"/>
        <dbReference type="ChEBI" id="CHEBI:15378"/>
        <dbReference type="ChEBI" id="CHEBI:43474"/>
        <dbReference type="ChEBI" id="CHEBI:57783"/>
        <dbReference type="ChEBI" id="CHEBI:58066"/>
        <dbReference type="ChEBI" id="CHEBI:58274"/>
        <dbReference type="ChEBI" id="CHEBI:58349"/>
        <dbReference type="EC" id="1.2.1.41"/>
    </reaction>
</comment>
<comment type="pathway">
    <text evidence="1">Amino-acid biosynthesis; L-proline biosynthesis; L-glutamate 5-semialdehyde from L-glutamate: step 2/2.</text>
</comment>
<comment type="subcellular location">
    <subcellularLocation>
        <location evidence="1">Cytoplasm</location>
    </subcellularLocation>
</comment>
<comment type="similarity">
    <text evidence="1">Belongs to the gamma-glutamyl phosphate reductase family.</text>
</comment>
<protein>
    <recommendedName>
        <fullName evidence="1">Gamma-glutamyl phosphate reductase</fullName>
        <shortName evidence="1">GPR</shortName>
        <ecNumber evidence="1">1.2.1.41</ecNumber>
    </recommendedName>
    <alternativeName>
        <fullName evidence="1">Glutamate-5-semialdehyde dehydrogenase</fullName>
    </alternativeName>
    <alternativeName>
        <fullName evidence="1">Glutamyl-gamma-semialdehyde dehydrogenase</fullName>
        <shortName evidence="1">GSA dehydrogenase</shortName>
    </alternativeName>
</protein>
<sequence>MSVLTLKARAGADDVDALMREIGRQARAAARRMALVSGQQKDRGLRAAAAAIRAAAPAILEANRADLTEARAKDLPAATLDRLELTPARVEAIAAAVEAIAGLPDPVGRRLAAFERPNGLSIERIATPLGVVGVIFESRPNVTADAGALCLKAGNAAVLRAGSESLRSAAAIAAAMTEGLVAEGLPADAIQLVPTRDRAAVGAMLSGLDGCIDVIVPRGGKNLVARVQNEAKVPVFAHLEGICHVFVHAAADLAMARTIVRNSKLRRTGICGAAETLLVDRACASTHLAPLVLDLLEAGCAVRGDEATRAVDPRVTPASEADWRTEYLDAVIAVRVVEGLDAAIDHIETFGSHHTDAIVTHDTGAAERFLAEVDSAIVVHNASTQFADGGEFGFGAEIGIATGRMHARGPVGVEQLTTFKYRVHGSGQIRP</sequence>
<feature type="chain" id="PRO_1000193623" description="Gamma-glutamyl phosphate reductase">
    <location>
        <begin position="1"/>
        <end position="431"/>
    </location>
</feature>
<name>PROA_METNO</name>
<proteinExistence type="inferred from homology"/>
<dbReference type="EC" id="1.2.1.41" evidence="1"/>
<dbReference type="EMBL" id="CP001349">
    <property type="protein sequence ID" value="ACL59593.1"/>
    <property type="molecule type" value="Genomic_DNA"/>
</dbReference>
<dbReference type="RefSeq" id="WP_015931227.1">
    <property type="nucleotide sequence ID" value="NC_011894.1"/>
</dbReference>
<dbReference type="SMR" id="B8IEM1"/>
<dbReference type="STRING" id="460265.Mnod_4728"/>
<dbReference type="KEGG" id="mno:Mnod_4728"/>
<dbReference type="eggNOG" id="COG0014">
    <property type="taxonomic scope" value="Bacteria"/>
</dbReference>
<dbReference type="HOGENOM" id="CLU_030231_0_0_5"/>
<dbReference type="OrthoDB" id="9809970at2"/>
<dbReference type="UniPathway" id="UPA00098">
    <property type="reaction ID" value="UER00360"/>
</dbReference>
<dbReference type="Proteomes" id="UP000008207">
    <property type="component" value="Chromosome"/>
</dbReference>
<dbReference type="GO" id="GO:0005737">
    <property type="term" value="C:cytoplasm"/>
    <property type="evidence" value="ECO:0007669"/>
    <property type="project" value="UniProtKB-SubCell"/>
</dbReference>
<dbReference type="GO" id="GO:0004350">
    <property type="term" value="F:glutamate-5-semialdehyde dehydrogenase activity"/>
    <property type="evidence" value="ECO:0007669"/>
    <property type="project" value="UniProtKB-UniRule"/>
</dbReference>
<dbReference type="GO" id="GO:0050661">
    <property type="term" value="F:NADP binding"/>
    <property type="evidence" value="ECO:0007669"/>
    <property type="project" value="InterPro"/>
</dbReference>
<dbReference type="GO" id="GO:0055129">
    <property type="term" value="P:L-proline biosynthetic process"/>
    <property type="evidence" value="ECO:0007669"/>
    <property type="project" value="UniProtKB-UniRule"/>
</dbReference>
<dbReference type="CDD" id="cd07079">
    <property type="entry name" value="ALDH_F18-19_ProA-GPR"/>
    <property type="match status" value="1"/>
</dbReference>
<dbReference type="FunFam" id="3.40.309.10:FF:000006">
    <property type="entry name" value="Gamma-glutamyl phosphate reductase"/>
    <property type="match status" value="1"/>
</dbReference>
<dbReference type="Gene3D" id="3.40.605.10">
    <property type="entry name" value="Aldehyde Dehydrogenase, Chain A, domain 1"/>
    <property type="match status" value="1"/>
</dbReference>
<dbReference type="Gene3D" id="3.40.309.10">
    <property type="entry name" value="Aldehyde Dehydrogenase, Chain A, domain 2"/>
    <property type="match status" value="1"/>
</dbReference>
<dbReference type="HAMAP" id="MF_00412">
    <property type="entry name" value="ProA"/>
    <property type="match status" value="1"/>
</dbReference>
<dbReference type="InterPro" id="IPR016161">
    <property type="entry name" value="Ald_DH/histidinol_DH"/>
</dbReference>
<dbReference type="InterPro" id="IPR016163">
    <property type="entry name" value="Ald_DH_C"/>
</dbReference>
<dbReference type="InterPro" id="IPR016162">
    <property type="entry name" value="Ald_DH_N"/>
</dbReference>
<dbReference type="InterPro" id="IPR015590">
    <property type="entry name" value="Aldehyde_DH_dom"/>
</dbReference>
<dbReference type="InterPro" id="IPR020593">
    <property type="entry name" value="G-glutamylP_reductase_CS"/>
</dbReference>
<dbReference type="InterPro" id="IPR012134">
    <property type="entry name" value="Glu-5-SA_DH"/>
</dbReference>
<dbReference type="InterPro" id="IPR000965">
    <property type="entry name" value="GPR_dom"/>
</dbReference>
<dbReference type="NCBIfam" id="NF001221">
    <property type="entry name" value="PRK00197.1"/>
    <property type="match status" value="1"/>
</dbReference>
<dbReference type="NCBIfam" id="TIGR00407">
    <property type="entry name" value="proA"/>
    <property type="match status" value="1"/>
</dbReference>
<dbReference type="PANTHER" id="PTHR11063:SF8">
    <property type="entry name" value="DELTA-1-PYRROLINE-5-CARBOXYLATE SYNTHASE"/>
    <property type="match status" value="1"/>
</dbReference>
<dbReference type="PANTHER" id="PTHR11063">
    <property type="entry name" value="GLUTAMATE SEMIALDEHYDE DEHYDROGENASE"/>
    <property type="match status" value="1"/>
</dbReference>
<dbReference type="Pfam" id="PF00171">
    <property type="entry name" value="Aldedh"/>
    <property type="match status" value="1"/>
</dbReference>
<dbReference type="PIRSF" id="PIRSF000151">
    <property type="entry name" value="GPR"/>
    <property type="match status" value="1"/>
</dbReference>
<dbReference type="SUPFAM" id="SSF53720">
    <property type="entry name" value="ALDH-like"/>
    <property type="match status" value="1"/>
</dbReference>
<dbReference type="PROSITE" id="PS01223">
    <property type="entry name" value="PROA"/>
    <property type="match status" value="1"/>
</dbReference>
<keyword id="KW-0028">Amino-acid biosynthesis</keyword>
<keyword id="KW-0963">Cytoplasm</keyword>
<keyword id="KW-0521">NADP</keyword>
<keyword id="KW-0560">Oxidoreductase</keyword>
<keyword id="KW-0641">Proline biosynthesis</keyword>
<keyword id="KW-1185">Reference proteome</keyword>
<accession>B8IEM1</accession>
<reference key="1">
    <citation type="submission" date="2009-01" db="EMBL/GenBank/DDBJ databases">
        <title>Complete sequence of chromosome of Methylobacterium nodulans ORS 2060.</title>
        <authorList>
            <consortium name="US DOE Joint Genome Institute"/>
            <person name="Lucas S."/>
            <person name="Copeland A."/>
            <person name="Lapidus A."/>
            <person name="Glavina del Rio T."/>
            <person name="Dalin E."/>
            <person name="Tice H."/>
            <person name="Bruce D."/>
            <person name="Goodwin L."/>
            <person name="Pitluck S."/>
            <person name="Sims D."/>
            <person name="Brettin T."/>
            <person name="Detter J.C."/>
            <person name="Han C."/>
            <person name="Larimer F."/>
            <person name="Land M."/>
            <person name="Hauser L."/>
            <person name="Kyrpides N."/>
            <person name="Ivanova N."/>
            <person name="Marx C.J."/>
            <person name="Richardson P."/>
        </authorList>
    </citation>
    <scope>NUCLEOTIDE SEQUENCE [LARGE SCALE GENOMIC DNA]</scope>
    <source>
        <strain>LMG 21967 / CNCM I-2342 / ORS 2060</strain>
    </source>
</reference>